<evidence type="ECO:0000250" key="1"/>
<evidence type="ECO:0000255" key="2">
    <source>
        <dbReference type="PROSITE-ProRule" id="PRU00042"/>
    </source>
</evidence>
<evidence type="ECO:0000255" key="3">
    <source>
        <dbReference type="PROSITE-ProRule" id="PRU00978"/>
    </source>
</evidence>
<evidence type="ECO:0000256" key="4">
    <source>
        <dbReference type="SAM" id="MobiDB-lite"/>
    </source>
</evidence>
<evidence type="ECO:0000305" key="5"/>
<organism>
    <name type="scientific">Gallus gallus</name>
    <name type="common">Chicken</name>
    <dbReference type="NCBI Taxonomy" id="9031"/>
    <lineage>
        <taxon>Eukaryota</taxon>
        <taxon>Metazoa</taxon>
        <taxon>Chordata</taxon>
        <taxon>Craniata</taxon>
        <taxon>Vertebrata</taxon>
        <taxon>Euteleostomi</taxon>
        <taxon>Archelosauria</taxon>
        <taxon>Archosauria</taxon>
        <taxon>Dinosauria</taxon>
        <taxon>Saurischia</taxon>
        <taxon>Theropoda</taxon>
        <taxon>Coelurosauria</taxon>
        <taxon>Aves</taxon>
        <taxon>Neognathae</taxon>
        <taxon>Galloanserae</taxon>
        <taxon>Galliformes</taxon>
        <taxon>Phasianidae</taxon>
        <taxon>Phasianinae</taxon>
        <taxon>Gallus</taxon>
    </lineage>
</organism>
<sequence length="487" mass="52407">MSDDKPFLCTAPGCGQRFTNEDHLAVHKHKHEMTLKFGPARNDSVIVADQTPTPTRFLKNCEEVGLFNELASPFENEFKKASEDDIKKMPLDLSPLATPIIRNKIEEPSVVETTHQDSPLPHPESTTNDEKEVSLQQTAQPTSTIVRPASLQVPNVLLTSSDSSVIIQQAIPSPTSSTVITQAPSSNRPIVPVPGPFPLLLHLPNGQTMPVAIPASITNSNVHVPAAVPLVRPVTMVPSIPGIPGPSSPQPVQSEAKLRLKAALTQQHPQVTNGDTAKGHPSGLVRTQSEEPRPQSLQQPATSTTETPASPAQPTQQTPNTGGRRRRAANEDPDEKRRKFLERNRAAASRCRQKRKVWVQSLEKKAEDLSSLNGQLQNEVTLLRNEVAQLKQLLLAHKDCPVTAMQKKSGYHTADKDDSSEDISVPSSPHTEAIQHSSVSTSNGVSSTSKAEAVATSVLTQLADQSSEPGLPQVGVVPPSQAQPSGS</sequence>
<name>ATF2_CHICK</name>
<comment type="function">
    <text evidence="1">Transcriptional activator which regulates the transcription of various genes, including those involved in anti-apoptosis, cell growth, and DNA damage response. Dependent on its binding partner, binds to CRE (cAMP response element) consensus sequences (5'-TGACGTCA-3') or to AP-1 (activator protein 1) consensus sequences (5'-TGACTCA-3') (By similarity).</text>
</comment>
<comment type="subunit">
    <text evidence="1">Binds DNA as a dimer and can form a homodimer in the absence of DNA. Can form a heterodimer with JUN. Heterodimerization is essential for its transcriptional activity (By similarity).</text>
</comment>
<comment type="subcellular location">
    <subcellularLocation>
        <location>Nucleus</location>
    </subcellularLocation>
    <subcellularLocation>
        <location evidence="1">Cytoplasm</location>
    </subcellularLocation>
    <subcellularLocation>
        <location evidence="1">Mitochondrion outer membrane</location>
    </subcellularLocation>
</comment>
<comment type="similarity">
    <text evidence="5">Belongs to the bZIP family. ATF subfamily.</text>
</comment>
<gene>
    <name type="primary">ATF2</name>
</gene>
<proteinExistence type="evidence at transcript level"/>
<feature type="chain" id="PRO_0000076580" description="Cyclic AMP-dependent transcription factor ATF-2">
    <location>
        <begin position="1"/>
        <end position="487"/>
    </location>
</feature>
<feature type="domain" description="bZIP" evidence="3">
    <location>
        <begin position="334"/>
        <end position="397"/>
    </location>
</feature>
<feature type="zinc finger region" description="C2H2-type" evidence="2">
    <location>
        <begin position="7"/>
        <end position="31"/>
    </location>
</feature>
<feature type="region of interest" description="Disordered" evidence="4">
    <location>
        <begin position="106"/>
        <end position="132"/>
    </location>
</feature>
<feature type="region of interest" description="Disordered" evidence="4">
    <location>
        <begin position="267"/>
        <end position="354"/>
    </location>
</feature>
<feature type="region of interest" description="Basic motif" evidence="3">
    <location>
        <begin position="336"/>
        <end position="356"/>
    </location>
</feature>
<feature type="region of interest" description="Leucine-zipper" evidence="3">
    <location>
        <begin position="362"/>
        <end position="390"/>
    </location>
</feature>
<feature type="region of interest" description="Disordered" evidence="4">
    <location>
        <begin position="407"/>
        <end position="487"/>
    </location>
</feature>
<feature type="short sequence motif" description="Nuclear export signal" evidence="1">
    <location>
        <begin position="387"/>
        <end position="396"/>
    </location>
</feature>
<feature type="compositionally biased region" description="Low complexity" evidence="4">
    <location>
        <begin position="298"/>
        <end position="319"/>
    </location>
</feature>
<feature type="compositionally biased region" description="Basic and acidic residues" evidence="4">
    <location>
        <begin position="328"/>
        <end position="345"/>
    </location>
</feature>
<feature type="compositionally biased region" description="Polar residues" evidence="4">
    <location>
        <begin position="425"/>
        <end position="436"/>
    </location>
</feature>
<feature type="compositionally biased region" description="Low complexity" evidence="4">
    <location>
        <begin position="437"/>
        <end position="449"/>
    </location>
</feature>
<feature type="compositionally biased region" description="Polar residues" evidence="4">
    <location>
        <begin position="457"/>
        <end position="468"/>
    </location>
</feature>
<protein>
    <recommendedName>
        <fullName>Cyclic AMP-dependent transcription factor ATF-2</fullName>
        <shortName>cAMP-dependent transcription factor ATF-2</shortName>
    </recommendedName>
    <alternativeName>
        <fullName>Activating transcription factor 2</fullName>
    </alternativeName>
</protein>
<keyword id="KW-0010">Activator</keyword>
<keyword id="KW-0963">Cytoplasm</keyword>
<keyword id="KW-0227">DNA damage</keyword>
<keyword id="KW-0238">DNA-binding</keyword>
<keyword id="KW-0472">Membrane</keyword>
<keyword id="KW-0479">Metal-binding</keyword>
<keyword id="KW-0496">Mitochondrion</keyword>
<keyword id="KW-1000">Mitochondrion outer membrane</keyword>
<keyword id="KW-0539">Nucleus</keyword>
<keyword id="KW-1185">Reference proteome</keyword>
<keyword id="KW-0804">Transcription</keyword>
<keyword id="KW-0805">Transcription regulation</keyword>
<keyword id="KW-0862">Zinc</keyword>
<keyword id="KW-0863">Zinc-finger</keyword>
<accession>O93602</accession>
<dbReference type="EMBL" id="Y17724">
    <property type="protein sequence ID" value="CAA76838.1"/>
    <property type="molecule type" value="mRNA"/>
</dbReference>
<dbReference type="RefSeq" id="NP_001383436.1">
    <property type="nucleotide sequence ID" value="NM_001396507.1"/>
</dbReference>
<dbReference type="RefSeq" id="NP_001383437.1">
    <property type="nucleotide sequence ID" value="NM_001396508.1"/>
</dbReference>
<dbReference type="RefSeq" id="NP_001383439.1">
    <property type="nucleotide sequence ID" value="NM_001396510.1"/>
</dbReference>
<dbReference type="RefSeq" id="NP_990235.1">
    <property type="nucleotide sequence ID" value="NM_204904.2"/>
</dbReference>
<dbReference type="RefSeq" id="XP_046776990.1">
    <property type="nucleotide sequence ID" value="XM_046921034.1"/>
</dbReference>
<dbReference type="RefSeq" id="XP_046776991.1">
    <property type="nucleotide sequence ID" value="XM_046921035.1"/>
</dbReference>
<dbReference type="RefSeq" id="XP_046799382.1">
    <property type="nucleotide sequence ID" value="XM_046943426.1"/>
</dbReference>
<dbReference type="RefSeq" id="XP_046799383.1">
    <property type="nucleotide sequence ID" value="XM_046943427.1"/>
</dbReference>
<dbReference type="BMRB" id="O93602"/>
<dbReference type="SMR" id="O93602"/>
<dbReference type="FunCoup" id="O93602">
    <property type="interactions" value="2389"/>
</dbReference>
<dbReference type="STRING" id="9031.ENSGALP00000032623"/>
<dbReference type="PaxDb" id="9031-ENSGALP00000032623"/>
<dbReference type="GeneID" id="395727"/>
<dbReference type="KEGG" id="gga:395727"/>
<dbReference type="CTD" id="1386"/>
<dbReference type="VEuPathDB" id="HostDB:geneid_395727"/>
<dbReference type="eggNOG" id="KOG1414">
    <property type="taxonomic scope" value="Eukaryota"/>
</dbReference>
<dbReference type="InParanoid" id="O93602"/>
<dbReference type="OMA" id="YQTADKD"/>
<dbReference type="OrthoDB" id="295274at2759"/>
<dbReference type="PhylomeDB" id="O93602"/>
<dbReference type="PRO" id="PR:O93602"/>
<dbReference type="Proteomes" id="UP000000539">
    <property type="component" value="Unassembled WGS sequence"/>
</dbReference>
<dbReference type="GO" id="GO:0005741">
    <property type="term" value="C:mitochondrial outer membrane"/>
    <property type="evidence" value="ECO:0007669"/>
    <property type="project" value="UniProtKB-SubCell"/>
</dbReference>
<dbReference type="GO" id="GO:0005634">
    <property type="term" value="C:nucleus"/>
    <property type="evidence" value="ECO:0007669"/>
    <property type="project" value="UniProtKB-SubCell"/>
</dbReference>
<dbReference type="GO" id="GO:0035497">
    <property type="term" value="F:cAMP response element binding"/>
    <property type="evidence" value="ECO:0000318"/>
    <property type="project" value="GO_Central"/>
</dbReference>
<dbReference type="GO" id="GO:0000981">
    <property type="term" value="F:DNA-binding transcription factor activity, RNA polymerase II-specific"/>
    <property type="evidence" value="ECO:0000318"/>
    <property type="project" value="GO_Central"/>
</dbReference>
<dbReference type="GO" id="GO:0008270">
    <property type="term" value="F:zinc ion binding"/>
    <property type="evidence" value="ECO:0007669"/>
    <property type="project" value="UniProtKB-KW"/>
</dbReference>
<dbReference type="GO" id="GO:0006974">
    <property type="term" value="P:DNA damage response"/>
    <property type="evidence" value="ECO:0007669"/>
    <property type="project" value="UniProtKB-KW"/>
</dbReference>
<dbReference type="GO" id="GO:0006357">
    <property type="term" value="P:regulation of transcription by RNA polymerase II"/>
    <property type="evidence" value="ECO:0000318"/>
    <property type="project" value="GO_Central"/>
</dbReference>
<dbReference type="CDD" id="cd14687">
    <property type="entry name" value="bZIP_ATF2"/>
    <property type="match status" value="1"/>
</dbReference>
<dbReference type="CDD" id="cd12192">
    <property type="entry name" value="GCN4_cent"/>
    <property type="match status" value="1"/>
</dbReference>
<dbReference type="FunFam" id="1.20.5.170:FF:000010">
    <property type="entry name" value="Cyclic AMP-dependent transcription factor ATF-2"/>
    <property type="match status" value="1"/>
</dbReference>
<dbReference type="Gene3D" id="1.20.5.170">
    <property type="match status" value="1"/>
</dbReference>
<dbReference type="Gene3D" id="3.30.160.60">
    <property type="entry name" value="Classic Zinc Finger"/>
    <property type="match status" value="1"/>
</dbReference>
<dbReference type="InterPro" id="IPR004827">
    <property type="entry name" value="bZIP"/>
</dbReference>
<dbReference type="InterPro" id="IPR046347">
    <property type="entry name" value="bZIP_sf"/>
</dbReference>
<dbReference type="InterPro" id="IPR051027">
    <property type="entry name" value="bZIP_transcription_factors"/>
</dbReference>
<dbReference type="InterPro" id="IPR016378">
    <property type="entry name" value="TF_CRE-BP1-typ"/>
</dbReference>
<dbReference type="InterPro" id="IPR036236">
    <property type="entry name" value="Znf_C2H2_sf"/>
</dbReference>
<dbReference type="InterPro" id="IPR013087">
    <property type="entry name" value="Znf_C2H2_type"/>
</dbReference>
<dbReference type="PANTHER" id="PTHR19304">
    <property type="entry name" value="CYCLIC-AMP RESPONSE ELEMENT BINDING PROTEIN"/>
    <property type="match status" value="1"/>
</dbReference>
<dbReference type="Pfam" id="PF00170">
    <property type="entry name" value="bZIP_1"/>
    <property type="match status" value="1"/>
</dbReference>
<dbReference type="PIRSF" id="PIRSF003153">
    <property type="entry name" value="ATF2_CRE-BP1"/>
    <property type="match status" value="1"/>
</dbReference>
<dbReference type="SMART" id="SM00338">
    <property type="entry name" value="BRLZ"/>
    <property type="match status" value="1"/>
</dbReference>
<dbReference type="SUPFAM" id="SSF57667">
    <property type="entry name" value="beta-beta-alpha zinc fingers"/>
    <property type="match status" value="1"/>
</dbReference>
<dbReference type="SUPFAM" id="SSF57959">
    <property type="entry name" value="Leucine zipper domain"/>
    <property type="match status" value="1"/>
</dbReference>
<dbReference type="PROSITE" id="PS50217">
    <property type="entry name" value="BZIP"/>
    <property type="match status" value="1"/>
</dbReference>
<dbReference type="PROSITE" id="PS00036">
    <property type="entry name" value="BZIP_BASIC"/>
    <property type="match status" value="1"/>
</dbReference>
<dbReference type="PROSITE" id="PS00028">
    <property type="entry name" value="ZINC_FINGER_C2H2_1"/>
    <property type="match status" value="1"/>
</dbReference>
<dbReference type="PROSITE" id="PS50157">
    <property type="entry name" value="ZINC_FINGER_C2H2_2"/>
    <property type="match status" value="1"/>
</dbReference>
<reference key="1">
    <citation type="journal article" date="1998" name="Mol. Cell. Biol.">
        <title>Transcription factor ATF2 cooperates with v-Jun to promote growth factor-independent proliferation in vitro and tumor formation in vivo.</title>
        <authorList>
            <person name="Huguier S."/>
            <person name="Baguet J."/>
            <person name="Perez S."/>
            <person name="van Dam H."/>
            <person name="Castellazzi M."/>
        </authorList>
    </citation>
    <scope>NUCLEOTIDE SEQUENCE [MRNA]</scope>
</reference>